<accession>P03214</accession>
<accession>Q777D7</accession>
<sequence length="809" mass="89853">MAEEPRAPEALSSTFMLNMTSDASVRRIVRRIGTLARRRVQQLPDMETFSPEFDPELSEPPFLPFSAYVITGTAGAGKSTSVSCLHHTMDCLVTGATTVAAQNLSQTLRAYCPTVYSAFGFKSRHINMTQRVSSHGRSTDAALEELQRRDLAKYWPVLSDIAAEFRRTKPRGLYSGVSGPAFEVLRDMHQGQLWTTNVIVVDEAGTLSVHILTAVVFCYWFFNAWLRTPLYRRGRIPCIVCVGSPTQTDAFQSSFSHETQVNKIRECDNILTFLVGNPRAATYVDVARNWALFINNKRCTDVQFGHLMKTLEYGLELSPDILAYVDRFVVPRAAIMDPAQYVGWTRLFLSHAEVKTFLTTLHATLKTAGQGRAARGTGGDGGGVTMFTCPVECEVFLDPLAQYKTLVGLPGLTAHTWLQKNYARLGNYSQFADQDMVPVGTEQDEERVKVTYNVTYVKHSSVSVNCKTKKSICGYTGTFGDFMDTLEADSFVEAHGHEQPEYVYSFLARLIYGGIYAFSHGGHSLCENGEYVAELGAVPLPGRTWDPEVTAGMELGELPLEVAWDGERSPAAVFYARVLAPPAANSAPLCSLLNIYNDLRAYFRQCLDVAVRYGGREFRDLPFCTFTNNMLIRDNIEFTSDEPLLHGLLDYASTTENYTLLGYTHLNVFFGIRGKQQPQDAGSSRMPRLMVKDEAGFVCCLEHNTNKLYETIEDKSLNLCSIRDYGISSKLAMTIAKAQGLSLNKVAICFGSHRNIKPGHVYVALSRARHSNCVVMDRNPLSEMITGEGNPASGYIVDALKNSRALLVY</sequence>
<feature type="chain" id="PRO_0000115854" description="DNA replication helicase">
    <location>
        <begin position="1"/>
        <end position="809"/>
    </location>
</feature>
<feature type="binding site" evidence="1">
    <location>
        <begin position="72"/>
        <end position="79"/>
    </location>
    <ligand>
        <name>ATP</name>
        <dbReference type="ChEBI" id="CHEBI:30616"/>
    </ligand>
</feature>
<proteinExistence type="inferred from homology"/>
<name>HELI_EBVB9</name>
<comment type="function">
    <text evidence="1">Component of the helicase/primase complex. Unwinds the DNA at the replication forks and generates single-stranded DNA for both leading and lagging strand synthesis. The primase synthesizes short RNA primers on the lagging strand that the polymerase elongates using dNTPs. Possesses helicase-like motifs and therefore may act as the helicase subunit of the complex.</text>
</comment>
<comment type="subunit">
    <text evidence="1">Associates with the primase and the primase-associated factor to form the helicase-primase complex.</text>
</comment>
<comment type="subcellular location">
    <subcellularLocation>
        <location evidence="1">Host nucleus</location>
    </subcellularLocation>
</comment>
<comment type="similarity">
    <text evidence="1">Belongs to the herpesviridae helicase family.</text>
</comment>
<organism>
    <name type="scientific">Epstein-Barr virus (strain B95-8)</name>
    <name type="common">HHV-4</name>
    <name type="synonym">Human herpesvirus 4</name>
    <dbReference type="NCBI Taxonomy" id="10377"/>
    <lineage>
        <taxon>Viruses</taxon>
        <taxon>Duplodnaviria</taxon>
        <taxon>Heunggongvirae</taxon>
        <taxon>Peploviricota</taxon>
        <taxon>Herviviricetes</taxon>
        <taxon>Herpesvirales</taxon>
        <taxon>Orthoherpesviridae</taxon>
        <taxon>Gammaherpesvirinae</taxon>
        <taxon>Lymphocryptovirus</taxon>
        <taxon>Lymphocryptovirus humangamma4</taxon>
        <taxon>Epstein-Barr virus (strain GD1)</taxon>
    </lineage>
</organism>
<gene>
    <name evidence="1" type="primary">HELI</name>
    <name type="ORF">BBLF4</name>
</gene>
<reference key="1">
    <citation type="journal article" date="1984" name="Nature">
        <title>DNA sequence and expression of the B95-8 Epstein-Barr virus genome.</title>
        <authorList>
            <person name="Baer R."/>
            <person name="Bankier A.T."/>
            <person name="Biggin M.D."/>
            <person name="Deininger P.L."/>
            <person name="Farrell P.J."/>
            <person name="Gibson T.J."/>
            <person name="Hatfull G."/>
            <person name="Hudson G.S."/>
            <person name="Satchwell S.C."/>
            <person name="Seguin C."/>
            <person name="Tuffnell P.S."/>
            <person name="Barrell B.G."/>
        </authorList>
    </citation>
    <scope>NUCLEOTIDE SEQUENCE [LARGE SCALE GENOMIC DNA]</scope>
</reference>
<reference key="2">
    <citation type="journal article" date="2003" name="Virology">
        <title>Updated Epstein-Barr virus (EBV) DNA sequence and analysis of a promoter for the BART (CST, BARF0) RNAs of EBV.</title>
        <authorList>
            <person name="de Jesus O."/>
            <person name="Smith P.R."/>
            <person name="Spender L.C."/>
            <person name="Elgueta Karstegl C."/>
            <person name="Niller H.H."/>
            <person name="Huang D."/>
            <person name="Farrell P.J."/>
        </authorList>
    </citation>
    <scope>GENOME REANNOTATION</scope>
</reference>
<organismHost>
    <name type="scientific">Homo sapiens</name>
    <name type="common">Human</name>
    <dbReference type="NCBI Taxonomy" id="9606"/>
</organismHost>
<keyword id="KW-0067">ATP-binding</keyword>
<keyword id="KW-0235">DNA replication</keyword>
<keyword id="KW-0347">Helicase</keyword>
<keyword id="KW-1048">Host nucleus</keyword>
<keyword id="KW-0378">Hydrolase</keyword>
<keyword id="KW-0547">Nucleotide-binding</keyword>
<keyword id="KW-1185">Reference proteome</keyword>
<protein>
    <recommendedName>
        <fullName evidence="1">DNA replication helicase</fullName>
        <ecNumber evidence="1">3.6.4.-</ecNumber>
    </recommendedName>
</protein>
<dbReference type="EC" id="3.6.4.-" evidence="1"/>
<dbReference type="EMBL" id="V01555">
    <property type="protein sequence ID" value="CAA24821.1"/>
    <property type="molecule type" value="Genomic_DNA"/>
</dbReference>
<dbReference type="EMBL" id="AJ507799">
    <property type="protein sequence ID" value="CAD53431.1"/>
    <property type="molecule type" value="Genomic_DNA"/>
</dbReference>
<dbReference type="PIR" id="F43043">
    <property type="entry name" value="QQBE34"/>
</dbReference>
<dbReference type="RefSeq" id="YP_401681.1">
    <property type="nucleotide sequence ID" value="NC_007605.1"/>
</dbReference>
<dbReference type="BioGRID" id="971727">
    <property type="interactions" value="1"/>
</dbReference>
<dbReference type="IntAct" id="P03214">
    <property type="interactions" value="1"/>
</dbReference>
<dbReference type="MINT" id="P03214"/>
<dbReference type="DNASU" id="3783685"/>
<dbReference type="GeneID" id="3783685"/>
<dbReference type="KEGG" id="vg:3783685"/>
<dbReference type="Proteomes" id="UP000153037">
    <property type="component" value="Segment"/>
</dbReference>
<dbReference type="GO" id="GO:0042025">
    <property type="term" value="C:host cell nucleus"/>
    <property type="evidence" value="ECO:0007669"/>
    <property type="project" value="UniProtKB-SubCell"/>
</dbReference>
<dbReference type="GO" id="GO:0005524">
    <property type="term" value="F:ATP binding"/>
    <property type="evidence" value="ECO:0007669"/>
    <property type="project" value="UniProtKB-KW"/>
</dbReference>
<dbReference type="GO" id="GO:0004386">
    <property type="term" value="F:helicase activity"/>
    <property type="evidence" value="ECO:0007669"/>
    <property type="project" value="UniProtKB-KW"/>
</dbReference>
<dbReference type="GO" id="GO:0016787">
    <property type="term" value="F:hydrolase activity"/>
    <property type="evidence" value="ECO:0007669"/>
    <property type="project" value="UniProtKB-KW"/>
</dbReference>
<dbReference type="GO" id="GO:0039686">
    <property type="term" value="P:bidirectional double-stranded viral DNA replication"/>
    <property type="evidence" value="ECO:0000314"/>
    <property type="project" value="UniProtKB"/>
</dbReference>
<dbReference type="GO" id="GO:0006260">
    <property type="term" value="P:DNA replication"/>
    <property type="evidence" value="ECO:0007669"/>
    <property type="project" value="UniProtKB-KW"/>
</dbReference>
<dbReference type="CDD" id="cd18809">
    <property type="entry name" value="SF1_C_RecD"/>
    <property type="match status" value="1"/>
</dbReference>
<dbReference type="Gene3D" id="3.40.50.300">
    <property type="entry name" value="P-loop containing nucleotide triphosphate hydrolases"/>
    <property type="match status" value="2"/>
</dbReference>
<dbReference type="HAMAP" id="MF_04030">
    <property type="entry name" value="HSV_HELI"/>
    <property type="match status" value="1"/>
</dbReference>
<dbReference type="InterPro" id="IPR003840">
    <property type="entry name" value="DNA_helicase_dom"/>
</dbReference>
<dbReference type="InterPro" id="IPR034711">
    <property type="entry name" value="HSV_HELI"/>
</dbReference>
<dbReference type="InterPro" id="IPR027417">
    <property type="entry name" value="P-loop_NTPase"/>
</dbReference>
<dbReference type="Pfam" id="PF02689">
    <property type="entry name" value="Herpes_Helicase"/>
    <property type="match status" value="1"/>
</dbReference>
<dbReference type="SUPFAM" id="SSF52540">
    <property type="entry name" value="P-loop containing nucleoside triphosphate hydrolases"/>
    <property type="match status" value="2"/>
</dbReference>
<evidence type="ECO:0000255" key="1">
    <source>
        <dbReference type="HAMAP-Rule" id="MF_04030"/>
    </source>
</evidence>